<feature type="initiator methionine" description="Removed" evidence="4">
    <location>
        <position position="1"/>
    </location>
</feature>
<feature type="chain" id="PRO_0000185762" description="UTP--glucose-1-phosphate uridylyltransferase">
    <location>
        <begin position="2"/>
        <end position="477"/>
    </location>
</feature>
<feature type="binding site" evidence="2">
    <location>
        <begin position="92"/>
        <end position="95"/>
    </location>
    <ligand>
        <name>UTP</name>
        <dbReference type="ChEBI" id="CHEBI:46398"/>
    </ligand>
</feature>
<feature type="binding site" evidence="1">
    <location>
        <begin position="94"/>
        <end position="95"/>
    </location>
    <ligand>
        <name>substrate</name>
    </ligand>
</feature>
<feature type="binding site" evidence="2">
    <location>
        <position position="106"/>
    </location>
    <ligand>
        <name>UTP</name>
        <dbReference type="ChEBI" id="CHEBI:46398"/>
    </ligand>
</feature>
<feature type="binding site" evidence="2">
    <location>
        <position position="169"/>
    </location>
    <ligand>
        <name>UTP</name>
        <dbReference type="ChEBI" id="CHEBI:46398"/>
    </ligand>
</feature>
<feature type="binding site" evidence="2">
    <location>
        <position position="198"/>
    </location>
    <ligand>
        <name>UTP</name>
        <dbReference type="ChEBI" id="CHEBI:46398"/>
    </ligand>
</feature>
<feature type="binding site" evidence="1">
    <location>
        <position position="199"/>
    </location>
    <ligand>
        <name>substrate</name>
    </ligand>
</feature>
<feature type="binding site" evidence="1">
    <location>
        <begin position="227"/>
        <end position="229"/>
    </location>
    <ligand>
        <name>substrate</name>
    </ligand>
</feature>
<feature type="binding site" evidence="2">
    <location>
        <position position="229"/>
    </location>
    <ligand>
        <name>UTP</name>
        <dbReference type="ChEBI" id="CHEBI:46398"/>
    </ligand>
</feature>
<feature type="binding site" evidence="2">
    <location>
        <position position="367"/>
    </location>
    <ligand>
        <name>UTP</name>
        <dbReference type="ChEBI" id="CHEBI:46398"/>
    </ligand>
</feature>
<feature type="modified residue" description="N-acetylalanine" evidence="4">
    <location>
        <position position="2"/>
    </location>
</feature>
<feature type="sequence variant" description="In strain: cv. Desiree, cv. ND860-2 and cv. Russet Burbank-1.">
    <original>T</original>
    <variation>A</variation>
    <location>
        <position position="5"/>
    </location>
</feature>
<feature type="sequence variant" description="In strain: cv. Desiree, cv. ND860-2 and cv. Russet Burbank-1.">
    <original>E</original>
    <variation>D</variation>
    <location>
        <position position="30"/>
    </location>
</feature>
<feature type="sequence variant" description="In strain: cv. Desiree, cv. ND860-2 and cv. Russet Burbank-1.">
    <original>K</original>
    <variation>N</variation>
    <location>
        <position position="82"/>
    </location>
</feature>
<feature type="sequence variant" description="In strain: cv. Desiree, cv. ND860-2 and cv. Russet Burbank-1.">
    <original>K</original>
    <variation>E</variation>
    <location>
        <position position="445"/>
    </location>
</feature>
<feature type="sequence variant" description="In strain: cv. Desiree, cv. ND860-2 and cv. Russet Burbank-1.">
    <original>V</original>
    <variation>I</variation>
    <location>
        <position position="450"/>
    </location>
</feature>
<feature type="mutagenesis site" description="Significant decreased Vmax values." evidence="3">
    <original>K</original>
    <variation>Q</variation>
    <location>
        <position position="263"/>
    </location>
</feature>
<feature type="mutagenesis site" description="Increased Km, Vmax like wild-type." evidence="3">
    <original>K</original>
    <variation>Q</variation>
    <location>
        <position position="329"/>
    </location>
</feature>
<feature type="mutagenesis site" description="Almost complete loss of activity." evidence="3">
    <original>K</original>
    <variation>Q</variation>
    <location>
        <position position="367"/>
    </location>
</feature>
<feature type="mutagenesis site" description="Activity almost like wild-type." evidence="3">
    <original>K</original>
    <variation>Q</variation>
    <location>
        <position position="409"/>
    </location>
</feature>
<feature type="mutagenesis site" description="Activity almost like wild-type." evidence="3">
    <original>K</original>
    <variation>Q</variation>
    <location>
        <position position="410"/>
    </location>
</feature>
<feature type="sequence conflict" description="In Ref. 2; AAB71613." evidence="5" ref="2">
    <original>A</original>
    <variation>V</variation>
    <location>
        <position position="2"/>
    </location>
</feature>
<proteinExistence type="evidence at protein level"/>
<protein>
    <recommendedName>
        <fullName>UTP--glucose-1-phosphate uridylyltransferase</fullName>
        <ecNumber>2.7.7.9</ecNumber>
    </recommendedName>
    <alternativeName>
        <fullName>UDP-glucose pyrophosphorylase</fullName>
        <shortName>UDPGP</shortName>
        <shortName>UGPase</shortName>
    </alternativeName>
</protein>
<accession>P19595</accession>
<accession>Q43192</accession>
<accession>Q5F1U8</accession>
<comment type="function">
    <text>Plays a central role as a glucosyl donor in cellular metabolic pathways.</text>
</comment>
<comment type="catalytic activity">
    <reaction>
        <text>alpha-D-glucose 1-phosphate + UTP + H(+) = UDP-alpha-D-glucose + diphosphate</text>
        <dbReference type="Rhea" id="RHEA:19889"/>
        <dbReference type="ChEBI" id="CHEBI:15378"/>
        <dbReference type="ChEBI" id="CHEBI:33019"/>
        <dbReference type="ChEBI" id="CHEBI:46398"/>
        <dbReference type="ChEBI" id="CHEBI:58601"/>
        <dbReference type="ChEBI" id="CHEBI:58885"/>
        <dbReference type="EC" id="2.7.7.9"/>
    </reaction>
</comment>
<comment type="cofactor">
    <cofactor>
        <name>Mg(2+)</name>
        <dbReference type="ChEBI" id="CHEBI:18420"/>
    </cofactor>
</comment>
<comment type="activity regulation">
    <text>Inhibition by uncomplexed, free UTP.</text>
</comment>
<comment type="subunit">
    <text>Monomer.</text>
</comment>
<comment type="subcellular location">
    <subcellularLocation>
        <location>Cytoplasm</location>
    </subcellularLocation>
</comment>
<comment type="similarity">
    <text evidence="5">Belongs to the UDPGP type 1 family.</text>
</comment>
<dbReference type="EC" id="2.7.7.9"/>
<dbReference type="EMBL" id="D00667">
    <property type="protein sequence ID" value="BAA00570.1"/>
    <property type="molecule type" value="mRNA"/>
</dbReference>
<dbReference type="EMBL" id="U20345">
    <property type="protein sequence ID" value="AAB71613.1"/>
    <property type="molecule type" value="Genomic_DNA"/>
</dbReference>
<dbReference type="EMBL" id="Z18924">
    <property type="protein sequence ID" value="CAA79357.1"/>
    <property type="molecule type" value="mRNA"/>
</dbReference>
<dbReference type="EMBL" id="AY082618">
    <property type="protein sequence ID" value="AAL99193.1"/>
    <property type="molecule type" value="mRNA"/>
</dbReference>
<dbReference type="EMBL" id="AY082619">
    <property type="protein sequence ID" value="AAL99194.1"/>
    <property type="molecule type" value="mRNA"/>
</dbReference>
<dbReference type="PIR" id="JX0128">
    <property type="entry name" value="XNPOU"/>
</dbReference>
<dbReference type="PIR" id="S31431">
    <property type="entry name" value="S31431"/>
</dbReference>
<dbReference type="SMR" id="P19595"/>
<dbReference type="FunCoup" id="P19595">
    <property type="interactions" value="2576"/>
</dbReference>
<dbReference type="STRING" id="4113.P19595"/>
<dbReference type="iPTMnet" id="P19595"/>
<dbReference type="PaxDb" id="4113-PGSC0003DMT400034699"/>
<dbReference type="eggNOG" id="KOG2638">
    <property type="taxonomic scope" value="Eukaryota"/>
</dbReference>
<dbReference type="InParanoid" id="P19595"/>
<dbReference type="OrthoDB" id="932129at2759"/>
<dbReference type="SABIO-RK" id="P19595"/>
<dbReference type="Proteomes" id="UP000011115">
    <property type="component" value="Unassembled WGS sequence"/>
</dbReference>
<dbReference type="ExpressionAtlas" id="P19595">
    <property type="expression patterns" value="baseline"/>
</dbReference>
<dbReference type="GO" id="GO:0005737">
    <property type="term" value="C:cytoplasm"/>
    <property type="evidence" value="ECO:0000318"/>
    <property type="project" value="GO_Central"/>
</dbReference>
<dbReference type="GO" id="GO:0003983">
    <property type="term" value="F:UTP:glucose-1-phosphate uridylyltransferase activity"/>
    <property type="evidence" value="ECO:0000318"/>
    <property type="project" value="GO_Central"/>
</dbReference>
<dbReference type="GO" id="GO:0005977">
    <property type="term" value="P:glycogen metabolic process"/>
    <property type="evidence" value="ECO:0000318"/>
    <property type="project" value="GO_Central"/>
</dbReference>
<dbReference type="GO" id="GO:0006011">
    <property type="term" value="P:UDP-alpha-D-glucose metabolic process"/>
    <property type="evidence" value="ECO:0000318"/>
    <property type="project" value="GO_Central"/>
</dbReference>
<dbReference type="CDD" id="cd00897">
    <property type="entry name" value="UGPase_euk"/>
    <property type="match status" value="1"/>
</dbReference>
<dbReference type="FunFam" id="2.160.10.10:FF:000001">
    <property type="entry name" value="UTP--glucose-1-phosphate uridylyltransferase"/>
    <property type="match status" value="1"/>
</dbReference>
<dbReference type="FunFam" id="3.90.550.10:FF:000073">
    <property type="entry name" value="UTP--glucose-1-phosphate uridylyltransferase"/>
    <property type="match status" value="1"/>
</dbReference>
<dbReference type="Gene3D" id="2.160.10.10">
    <property type="entry name" value="Hexapeptide repeat proteins"/>
    <property type="match status" value="1"/>
</dbReference>
<dbReference type="Gene3D" id="3.90.550.10">
    <property type="entry name" value="Spore Coat Polysaccharide Biosynthesis Protein SpsA, Chain A"/>
    <property type="match status" value="1"/>
</dbReference>
<dbReference type="InterPro" id="IPR029044">
    <property type="entry name" value="Nucleotide-diphossugar_trans"/>
</dbReference>
<dbReference type="InterPro" id="IPR002618">
    <property type="entry name" value="UDPGP_fam"/>
</dbReference>
<dbReference type="InterPro" id="IPR016267">
    <property type="entry name" value="UDPGP_trans"/>
</dbReference>
<dbReference type="PANTHER" id="PTHR43511">
    <property type="match status" value="1"/>
</dbReference>
<dbReference type="Pfam" id="PF01704">
    <property type="entry name" value="UDPGP"/>
    <property type="match status" value="1"/>
</dbReference>
<dbReference type="PIRSF" id="PIRSF000806">
    <property type="entry name" value="UDPGP"/>
    <property type="match status" value="1"/>
</dbReference>
<dbReference type="SUPFAM" id="SSF53448">
    <property type="entry name" value="Nucleotide-diphospho-sugar transferases"/>
    <property type="match status" value="1"/>
</dbReference>
<sequence length="477" mass="51874">MATATTLSPADAEKLNNLKSAVAGLNQISENEKSGFINLVGRYLSGEAQHIDWSKIQTPTDEVVVPYDKLAPLSEDPAETKKLLDKLVVLKLNGGLGTTMGCTGPKSVIEVRNGLTFLDLIVKQIEALNAKFGCSVPLLLMNSFNTHDDTLKIVEKYANSNIDIHTFNQSQYPRLVTEDFAPLPCKGNSGKDGWYPPGHGDVFPSLMNSGKLDALLAKGKEYVFVANSDNLGAIVDLKILNHLILNKNEYCMEVTPKTLADVKGGTLISYEGKVQLLEIAQVPDEHVNEFKSIEKFKIFNTNNLWVNLSAIKRLVEADALKMEIIPNPKEVDGVKVLQLETAAGAAIKFFDRAIGANVPRSRFLPVKATSDLLLVQSDLYTLTDEGYVIRNPARSNPSNPSIELGPEFKKVANFLGRFKSIPSIIDLDSLKVTGDVWFGSGVTLKGKVTVAAKSGVKLEIPDGAVIANKDINGPEDI</sequence>
<organism>
    <name type="scientific">Solanum tuberosum</name>
    <name type="common">Potato</name>
    <dbReference type="NCBI Taxonomy" id="4113"/>
    <lineage>
        <taxon>Eukaryota</taxon>
        <taxon>Viridiplantae</taxon>
        <taxon>Streptophyta</taxon>
        <taxon>Embryophyta</taxon>
        <taxon>Tracheophyta</taxon>
        <taxon>Spermatophyta</taxon>
        <taxon>Magnoliopsida</taxon>
        <taxon>eudicotyledons</taxon>
        <taxon>Gunneridae</taxon>
        <taxon>Pentapetalae</taxon>
        <taxon>asterids</taxon>
        <taxon>lamiids</taxon>
        <taxon>Solanales</taxon>
        <taxon>Solanaceae</taxon>
        <taxon>Solanoideae</taxon>
        <taxon>Solaneae</taxon>
        <taxon>Solanum</taxon>
    </lineage>
</organism>
<evidence type="ECO:0000250" key="1">
    <source>
        <dbReference type="UniProtKB" id="Q16851"/>
    </source>
</evidence>
<evidence type="ECO:0000250" key="2">
    <source>
        <dbReference type="UniProtKB" id="Q9M9P3"/>
    </source>
</evidence>
<evidence type="ECO:0000269" key="3">
    <source>
    </source>
</evidence>
<evidence type="ECO:0000269" key="4">
    <source>
    </source>
</evidence>
<evidence type="ECO:0000305" key="5"/>
<keyword id="KW-0007">Acetylation</keyword>
<keyword id="KW-0963">Cytoplasm</keyword>
<keyword id="KW-0903">Direct protein sequencing</keyword>
<keyword id="KW-0460">Magnesium</keyword>
<keyword id="KW-0548">Nucleotidyltransferase</keyword>
<keyword id="KW-1185">Reference proteome</keyword>
<keyword id="KW-0808">Transferase</keyword>
<name>UGPA_SOLTU</name>
<reference key="1">
    <citation type="journal article" date="1990" name="J. Biochem.">
        <title>UDP-glucose pyrophosphorylase from potato tuber: cDNA cloning and sequencing.</title>
        <authorList>
            <person name="Katsube T."/>
            <person name="Kazuta Y."/>
            <person name="Mori H."/>
            <person name="Nakano K."/>
            <person name="Tanizawa K."/>
            <person name="Fukui T."/>
        </authorList>
    </citation>
    <scope>NUCLEOTIDE SEQUENCE [MRNA]</scope>
    <scope>ACETYLATION AT ALA-2</scope>
    <source>
        <tissue>Tuber</tissue>
    </source>
</reference>
<reference key="2">
    <citation type="journal article" date="1997" name="Gene">
        <title>Organization and transcription of the gene encoding potato UDP-glucose pyrophosphorylase.</title>
        <authorList>
            <person name="Borovkov A.Y."/>
            <person name="McClean P.E."/>
            <person name="Secor G.A."/>
        </authorList>
    </citation>
    <scope>NUCLEOTIDE SEQUENCE [GENOMIC DNA]</scope>
    <source>
        <strain>cv. Lemhi Russet</strain>
    </source>
</reference>
<reference key="3">
    <citation type="submission" date="1992-12" db="EMBL/GenBank/DDBJ databases">
        <title>UDP-glucose pyrophosphorylase of potato tuber: cDNA sequence, transgenic tuber-specific inhibition and control of post-harvest sugar metabolism.</title>
        <authorList>
            <person name="Spychalla J.P."/>
            <person name="Bevan M.W."/>
        </authorList>
    </citation>
    <scope>NUCLEOTIDE SEQUENCE [MRNA]</scope>
    <source>
        <strain>cv. Desiree</strain>
        <tissue>Tuber</tissue>
    </source>
</reference>
<reference key="4">
    <citation type="journal article" date="2004" name="J. Plant Physiol.">
        <title>Molecular cloning and sequence variation of UDP-glucose pyrophosphorylase cDNAs from potatoes sensitive and resistant to cold sweetening.</title>
        <authorList>
            <person name="Sowokinos J.R."/>
            <person name="Vigdorovich V."/>
            <person name="Abrahamsen M."/>
        </authorList>
    </citation>
    <scope>NUCLEOTIDE SEQUENCE [MRNA]</scope>
    <source>
        <strain>cv. ND860-2</strain>
        <strain>cv. Russet Burbank-1</strain>
    </source>
</reference>
<reference key="5">
    <citation type="journal article" date="1989" name="J. Biochem.">
        <title>UDP-glucose pyrophosphorylase from potato tuber: purification and characterization.</title>
        <authorList>
            <person name="Nakano K."/>
            <person name="Omura Y."/>
            <person name="Tagaya M."/>
            <person name="Fukui T."/>
        </authorList>
    </citation>
    <scope>PARTIAL PROTEIN SEQUENCE</scope>
    <scope>CHARACTERIZATION</scope>
    <source>
        <tissue>Tuber</tissue>
    </source>
</reference>
<reference key="6">
    <citation type="journal article" date="1991" name="Biochemistry">
        <title>Expression in Escherichia coli of UDP-glucose pyrophosphorylase cDNA from potato tuber and functional assessment of the five lysyl residues located at the substrate-binding site.</title>
        <authorList>
            <person name="Katsube T."/>
            <person name="Kazuta Y."/>
            <person name="Tanizawa K."/>
            <person name="Fukui T."/>
        </authorList>
    </citation>
    <scope>MUTAGENESIS OF LYSINE RESIDUES</scope>
</reference>